<sequence>MPFAQIYMLEGRSEEQKKAVIEKVTRALVEAVGAPSANVRVWIHDVPKENWGIAGVSAKELGR</sequence>
<feature type="initiator methionine" description="Removed" evidence="1">
    <location>
        <position position="1"/>
    </location>
</feature>
<feature type="chain" id="PRO_0000209511" description="2-hydroxymuconate tautomerase">
    <location>
        <begin position="2"/>
        <end position="63"/>
    </location>
</feature>
<feature type="active site" description="Proton acceptor; via imino nitrogen" evidence="1">
    <location>
        <position position="2"/>
    </location>
</feature>
<accession>Q9RHM8</accession>
<keyword id="KW-0058">Aromatic hydrocarbons catabolism</keyword>
<keyword id="KW-0413">Isomerase</keyword>
<dbReference type="EC" id="5.3.2.6"/>
<dbReference type="EMBL" id="AB029044">
    <property type="protein sequence ID" value="BAA88507.1"/>
    <property type="molecule type" value="Genomic_DNA"/>
</dbReference>
<dbReference type="SMR" id="Q9RHM8"/>
<dbReference type="UniPathway" id="UPA00824"/>
<dbReference type="GO" id="GO:0016853">
    <property type="term" value="F:isomerase activity"/>
    <property type="evidence" value="ECO:0007669"/>
    <property type="project" value="UniProtKB-KW"/>
</dbReference>
<dbReference type="GO" id="GO:0046244">
    <property type="term" value="P:salicylic acid catabolic process"/>
    <property type="evidence" value="ECO:0007669"/>
    <property type="project" value="UniProtKB-UniPathway"/>
</dbReference>
<dbReference type="CDD" id="cd00491">
    <property type="entry name" value="4Oxalocrotonate_Tautomerase"/>
    <property type="match status" value="1"/>
</dbReference>
<dbReference type="Gene3D" id="3.30.429.10">
    <property type="entry name" value="Macrophage Migration Inhibitory Factor"/>
    <property type="match status" value="1"/>
</dbReference>
<dbReference type="InterPro" id="IPR018191">
    <property type="entry name" value="4-OT"/>
</dbReference>
<dbReference type="InterPro" id="IPR004370">
    <property type="entry name" value="4-OT-like_dom"/>
</dbReference>
<dbReference type="InterPro" id="IPR014347">
    <property type="entry name" value="Tautomerase/MIF_sf"/>
</dbReference>
<dbReference type="NCBIfam" id="NF002571">
    <property type="entry name" value="PRK02220.1"/>
    <property type="match status" value="1"/>
</dbReference>
<dbReference type="NCBIfam" id="TIGR00013">
    <property type="entry name" value="taut"/>
    <property type="match status" value="1"/>
</dbReference>
<dbReference type="PANTHER" id="PTHR35530:SF1">
    <property type="entry name" value="2-HYDROXYMUCONATE TAUTOMERASE"/>
    <property type="match status" value="1"/>
</dbReference>
<dbReference type="PANTHER" id="PTHR35530">
    <property type="entry name" value="TAUTOMERASE-RELATED"/>
    <property type="match status" value="1"/>
</dbReference>
<dbReference type="Pfam" id="PF01361">
    <property type="entry name" value="Tautomerase"/>
    <property type="match status" value="1"/>
</dbReference>
<dbReference type="SUPFAM" id="SSF55331">
    <property type="entry name" value="Tautomerase/MIF"/>
    <property type="match status" value="1"/>
</dbReference>
<proteinExistence type="inferred from homology"/>
<comment type="function">
    <text>Catalyzes the ketonization of 2-hydroxymuconate stereoselectively to yield 2-oxo-3-hexenedioate.</text>
</comment>
<comment type="catalytic activity">
    <reaction>
        <text>(2Z,4E)-2-hydroxyhexa-2,4-dienedioate = (3E)-2-oxohex-3-enedioate</text>
        <dbReference type="Rhea" id="RHEA:33431"/>
        <dbReference type="ChEBI" id="CHEBI:28080"/>
        <dbReference type="ChEBI" id="CHEBI:64908"/>
        <dbReference type="EC" id="5.3.2.6"/>
    </reaction>
</comment>
<comment type="pathway">
    <text>Aromatic compound metabolism; salicylate degradation.</text>
</comment>
<comment type="subunit">
    <text evidence="1">Homohexamer.</text>
</comment>
<comment type="similarity">
    <text evidence="2">Belongs to the 4-oxalocrotonate tautomerase family.</text>
</comment>
<gene>
    <name type="primary">aphI</name>
</gene>
<name>4OT_COMTE</name>
<organism>
    <name type="scientific">Comamonas testosteroni</name>
    <name type="common">Pseudomonas testosteroni</name>
    <dbReference type="NCBI Taxonomy" id="285"/>
    <lineage>
        <taxon>Bacteria</taxon>
        <taxon>Pseudomonadati</taxon>
        <taxon>Pseudomonadota</taxon>
        <taxon>Betaproteobacteria</taxon>
        <taxon>Burkholderiales</taxon>
        <taxon>Comamonadaceae</taxon>
        <taxon>Comamonas</taxon>
    </lineage>
</organism>
<protein>
    <recommendedName>
        <fullName>2-hydroxymuconate tautomerase</fullName>
        <ecNumber>5.3.2.6</ecNumber>
    </recommendedName>
    <alternativeName>
        <fullName>4-oxalocrotonate tautomerase</fullName>
        <shortName>4-OT</shortName>
    </alternativeName>
</protein>
<reference key="1">
    <citation type="journal article" date="2000" name="Microbiology">
        <title>Arrangement and regulation of the genes for meta-pathway enzymes required for degradation of phenol in Comamonas testosteroni TA441.</title>
        <authorList>
            <person name="Arai H."/>
            <person name="Ohishi T."/>
            <person name="Chang M.Y."/>
            <person name="Kudo T."/>
        </authorList>
    </citation>
    <scope>NUCLEOTIDE SEQUENCE [GENOMIC DNA]</scope>
    <source>
        <strain>TA441</strain>
    </source>
</reference>
<evidence type="ECO:0000250" key="1"/>
<evidence type="ECO:0000305" key="2"/>